<feature type="chain" id="PRO_0000148481" description="Dihydroorotate dehydrogenase (quinone)">
    <location>
        <begin position="1"/>
        <end position="381"/>
    </location>
</feature>
<feature type="active site" description="Nucleophile" evidence="1">
    <location>
        <position position="194"/>
    </location>
</feature>
<feature type="binding site" evidence="1">
    <location>
        <begin position="77"/>
        <end position="81"/>
    </location>
    <ligand>
        <name>FMN</name>
        <dbReference type="ChEBI" id="CHEBI:58210"/>
    </ligand>
</feature>
<feature type="binding site" evidence="1">
    <location>
        <position position="81"/>
    </location>
    <ligand>
        <name>substrate</name>
    </ligand>
</feature>
<feature type="binding site" evidence="1">
    <location>
        <position position="101"/>
    </location>
    <ligand>
        <name>FMN</name>
        <dbReference type="ChEBI" id="CHEBI:58210"/>
    </ligand>
</feature>
<feature type="binding site" evidence="1">
    <location>
        <begin position="126"/>
        <end position="129"/>
    </location>
    <ligand>
        <name>substrate</name>
    </ligand>
</feature>
<feature type="binding site" evidence="1">
    <location>
        <position position="158"/>
    </location>
    <ligand>
        <name>FMN</name>
        <dbReference type="ChEBI" id="CHEBI:58210"/>
    </ligand>
</feature>
<feature type="binding site" evidence="1">
    <location>
        <position position="191"/>
    </location>
    <ligand>
        <name>FMN</name>
        <dbReference type="ChEBI" id="CHEBI:58210"/>
    </ligand>
</feature>
<feature type="binding site" evidence="1">
    <location>
        <position position="191"/>
    </location>
    <ligand>
        <name>substrate</name>
    </ligand>
</feature>
<feature type="binding site" evidence="1">
    <location>
        <position position="196"/>
    </location>
    <ligand>
        <name>substrate</name>
    </ligand>
</feature>
<feature type="binding site" evidence="1">
    <location>
        <position position="229"/>
    </location>
    <ligand>
        <name>FMN</name>
        <dbReference type="ChEBI" id="CHEBI:58210"/>
    </ligand>
</feature>
<feature type="binding site" evidence="1">
    <location>
        <position position="257"/>
    </location>
    <ligand>
        <name>FMN</name>
        <dbReference type="ChEBI" id="CHEBI:58210"/>
    </ligand>
</feature>
<feature type="binding site" evidence="1">
    <location>
        <begin position="258"/>
        <end position="259"/>
    </location>
    <ligand>
        <name>substrate</name>
    </ligand>
</feature>
<feature type="binding site" evidence="1">
    <location>
        <position position="287"/>
    </location>
    <ligand>
        <name>FMN</name>
        <dbReference type="ChEBI" id="CHEBI:58210"/>
    </ligand>
</feature>
<feature type="binding site" evidence="1">
    <location>
        <position position="316"/>
    </location>
    <ligand>
        <name>FMN</name>
        <dbReference type="ChEBI" id="CHEBI:58210"/>
    </ligand>
</feature>
<feature type="binding site" evidence="1">
    <location>
        <begin position="337"/>
        <end position="338"/>
    </location>
    <ligand>
        <name>FMN</name>
        <dbReference type="ChEBI" id="CHEBI:58210"/>
    </ligand>
</feature>
<keyword id="KW-1003">Cell membrane</keyword>
<keyword id="KW-0285">Flavoprotein</keyword>
<keyword id="KW-0288">FMN</keyword>
<keyword id="KW-0472">Membrane</keyword>
<keyword id="KW-0560">Oxidoreductase</keyword>
<keyword id="KW-0665">Pyrimidine biosynthesis</keyword>
<keyword id="KW-1185">Reference proteome</keyword>
<reference key="1">
    <citation type="journal article" date="1996" name="DNA Res.">
        <title>Sequence analysis of the genome of the unicellular cyanobacterium Synechocystis sp. strain PCC6803. II. Sequence determination of the entire genome and assignment of potential protein-coding regions.</title>
        <authorList>
            <person name="Kaneko T."/>
            <person name="Sato S."/>
            <person name="Kotani H."/>
            <person name="Tanaka A."/>
            <person name="Asamizu E."/>
            <person name="Nakamura Y."/>
            <person name="Miyajima N."/>
            <person name="Hirosawa M."/>
            <person name="Sugiura M."/>
            <person name="Sasamoto S."/>
            <person name="Kimura T."/>
            <person name="Hosouchi T."/>
            <person name="Matsuno A."/>
            <person name="Muraki A."/>
            <person name="Nakazaki N."/>
            <person name="Naruo K."/>
            <person name="Okumura S."/>
            <person name="Shimpo S."/>
            <person name="Takeuchi C."/>
            <person name="Wada T."/>
            <person name="Watanabe A."/>
            <person name="Yamada M."/>
            <person name="Yasuda M."/>
            <person name="Tabata S."/>
        </authorList>
    </citation>
    <scope>NUCLEOTIDE SEQUENCE [LARGE SCALE GENOMIC DNA]</scope>
    <source>
        <strain>ATCC 27184 / PCC 6803 / Kazusa</strain>
    </source>
</reference>
<name>PYRD_SYNY3</name>
<comment type="function">
    <text evidence="1">Catalyzes the conversion of dihydroorotate to orotate with quinone as electron acceptor.</text>
</comment>
<comment type="catalytic activity">
    <reaction>
        <text>(S)-dihydroorotate + a quinone = orotate + a quinol</text>
        <dbReference type="Rhea" id="RHEA:30187"/>
        <dbReference type="ChEBI" id="CHEBI:24646"/>
        <dbReference type="ChEBI" id="CHEBI:30839"/>
        <dbReference type="ChEBI" id="CHEBI:30864"/>
        <dbReference type="ChEBI" id="CHEBI:132124"/>
        <dbReference type="EC" id="1.3.5.2"/>
    </reaction>
</comment>
<comment type="cofactor">
    <cofactor evidence="1">
        <name>FMN</name>
        <dbReference type="ChEBI" id="CHEBI:58210"/>
    </cofactor>
    <text evidence="1">Binds 1 FMN per subunit.</text>
</comment>
<comment type="pathway">
    <text>Pyrimidine metabolism; UMP biosynthesis via de novo pathway; orotate from (S)-dihydroorotate (quinone route): step 1/1.</text>
</comment>
<comment type="subunit">
    <text evidence="1">Monomer.</text>
</comment>
<comment type="subcellular location">
    <subcellularLocation>
        <location evidence="1">Cell membrane</location>
        <topology evidence="1">Peripheral membrane protein</topology>
    </subcellularLocation>
</comment>
<comment type="similarity">
    <text evidence="2">Belongs to the dihydroorotate dehydrogenase family. Type 2 subfamily.</text>
</comment>
<evidence type="ECO:0000250" key="1"/>
<evidence type="ECO:0000305" key="2"/>
<organism>
    <name type="scientific">Synechocystis sp. (strain ATCC 27184 / PCC 6803 / Kazusa)</name>
    <dbReference type="NCBI Taxonomy" id="1111708"/>
    <lineage>
        <taxon>Bacteria</taxon>
        <taxon>Bacillati</taxon>
        <taxon>Cyanobacteriota</taxon>
        <taxon>Cyanophyceae</taxon>
        <taxon>Synechococcales</taxon>
        <taxon>Merismopediaceae</taxon>
        <taxon>Synechocystis</taxon>
    </lineage>
</organism>
<gene>
    <name type="primary">pyrD</name>
    <name type="ordered locus">slr1418</name>
</gene>
<accession>P74782</accession>
<accession>P74522</accession>
<proteinExistence type="inferred from homology"/>
<sequence length="381" mass="41559">MLRFARSLYPLILSVTKSDPERGHQRLIQTLKKVDTMHRNGFAVAMEQLEQAFTHADPRLQQTCWGLNFPNVLGLSAGCDKEGEAAAVWPALGFGFAELGAVTKYAQPGNDRPRLFRLPQDQAVLNRLGANNEGAVAMAAKLKHTWDYYPRTIPIGINLCKSKITPLDQAVEDYVFSFQTLAPVADYFVVNVSSPNTPGLRSLQESDELPRIFAGLQSANHWQKPLLVKISPDLSWEAIAVIIDLVKEHNLSGIVATNTSTRRSGLKTKILPQTGQPIEQEAGGLSGQPIRDRATEVIRYIYQQTGGTIPIIGVGGIFTAEDAWEKIQAGASFLQIYTGWIYGGPWVVSDILQGLGEKLAAGGFSHISEAVGIDTIGKAPE</sequence>
<protein>
    <recommendedName>
        <fullName>Dihydroorotate dehydrogenase (quinone)</fullName>
        <ecNumber>1.3.5.2</ecNumber>
    </recommendedName>
    <alternativeName>
        <fullName>DHOdehase</fullName>
        <shortName>DHOD</shortName>
        <shortName>DHODase</shortName>
    </alternativeName>
    <alternativeName>
        <fullName>Dihydroorotate oxidase</fullName>
    </alternativeName>
</protein>
<dbReference type="EC" id="1.3.5.2"/>
<dbReference type="EMBL" id="BA000022">
    <property type="protein sequence ID" value="BAA18627.2"/>
    <property type="molecule type" value="Genomic_DNA"/>
</dbReference>
<dbReference type="PIR" id="S76039">
    <property type="entry name" value="S76039"/>
</dbReference>
<dbReference type="SMR" id="P74782"/>
<dbReference type="FunCoup" id="P74782">
    <property type="interactions" value="479"/>
</dbReference>
<dbReference type="IntAct" id="P74782">
    <property type="interactions" value="1"/>
</dbReference>
<dbReference type="STRING" id="1148.gene:10500392"/>
<dbReference type="PaxDb" id="1148-14595183"/>
<dbReference type="EnsemblBacteria" id="BAA18627">
    <property type="protein sequence ID" value="BAA18627"/>
    <property type="gene ID" value="BAA18627"/>
</dbReference>
<dbReference type="KEGG" id="syn:slr1418"/>
<dbReference type="eggNOG" id="COG0167">
    <property type="taxonomic scope" value="Bacteria"/>
</dbReference>
<dbReference type="InParanoid" id="P74782"/>
<dbReference type="PhylomeDB" id="P74782"/>
<dbReference type="UniPathway" id="UPA00070">
    <property type="reaction ID" value="UER00946"/>
</dbReference>
<dbReference type="Proteomes" id="UP000001425">
    <property type="component" value="Chromosome"/>
</dbReference>
<dbReference type="GO" id="GO:0005737">
    <property type="term" value="C:cytoplasm"/>
    <property type="evidence" value="ECO:0007669"/>
    <property type="project" value="InterPro"/>
</dbReference>
<dbReference type="GO" id="GO:0005886">
    <property type="term" value="C:plasma membrane"/>
    <property type="evidence" value="ECO:0007669"/>
    <property type="project" value="UniProtKB-SubCell"/>
</dbReference>
<dbReference type="GO" id="GO:0106430">
    <property type="term" value="F:dihydroorotate dehydrogenase (quinone) activity"/>
    <property type="evidence" value="ECO:0007669"/>
    <property type="project" value="UniProtKB-EC"/>
</dbReference>
<dbReference type="GO" id="GO:0004152">
    <property type="term" value="F:dihydroorotate dehydrogenase activity"/>
    <property type="evidence" value="ECO:0000318"/>
    <property type="project" value="GO_Central"/>
</dbReference>
<dbReference type="GO" id="GO:0006207">
    <property type="term" value="P:'de novo' pyrimidine nucleobase biosynthetic process"/>
    <property type="evidence" value="ECO:0000318"/>
    <property type="project" value="GO_Central"/>
</dbReference>
<dbReference type="GO" id="GO:0044205">
    <property type="term" value="P:'de novo' UMP biosynthetic process"/>
    <property type="evidence" value="ECO:0007669"/>
    <property type="project" value="UniProtKB-UniRule"/>
</dbReference>
<dbReference type="GO" id="GO:0009220">
    <property type="term" value="P:pyrimidine ribonucleotide biosynthetic process"/>
    <property type="evidence" value="ECO:0000318"/>
    <property type="project" value="GO_Central"/>
</dbReference>
<dbReference type="CDD" id="cd04738">
    <property type="entry name" value="DHOD_2_like"/>
    <property type="match status" value="1"/>
</dbReference>
<dbReference type="FunFam" id="3.20.20.70:FF:000123">
    <property type="entry name" value="Dihydroorotate dehydrogenase (quinone)"/>
    <property type="match status" value="1"/>
</dbReference>
<dbReference type="Gene3D" id="3.20.20.70">
    <property type="entry name" value="Aldolase class I"/>
    <property type="match status" value="1"/>
</dbReference>
<dbReference type="HAMAP" id="MF_00225">
    <property type="entry name" value="DHO_dh_type2"/>
    <property type="match status" value="1"/>
</dbReference>
<dbReference type="InterPro" id="IPR013785">
    <property type="entry name" value="Aldolase_TIM"/>
</dbReference>
<dbReference type="InterPro" id="IPR050074">
    <property type="entry name" value="DHO_dehydrogenase"/>
</dbReference>
<dbReference type="InterPro" id="IPR005719">
    <property type="entry name" value="Dihydroorotate_DH_2"/>
</dbReference>
<dbReference type="InterPro" id="IPR005720">
    <property type="entry name" value="Dihydroorotate_DH_cat"/>
</dbReference>
<dbReference type="InterPro" id="IPR001295">
    <property type="entry name" value="Dihydroorotate_DH_CS"/>
</dbReference>
<dbReference type="NCBIfam" id="NF003651">
    <property type="entry name" value="PRK05286.2-4"/>
    <property type="match status" value="1"/>
</dbReference>
<dbReference type="NCBIfam" id="NF003652">
    <property type="entry name" value="PRK05286.2-5"/>
    <property type="match status" value="1"/>
</dbReference>
<dbReference type="NCBIfam" id="TIGR01036">
    <property type="entry name" value="pyrD_sub2"/>
    <property type="match status" value="1"/>
</dbReference>
<dbReference type="PANTHER" id="PTHR48109:SF4">
    <property type="entry name" value="DIHYDROOROTATE DEHYDROGENASE (QUINONE), MITOCHONDRIAL"/>
    <property type="match status" value="1"/>
</dbReference>
<dbReference type="PANTHER" id="PTHR48109">
    <property type="entry name" value="DIHYDROOROTATE DEHYDROGENASE (QUINONE), MITOCHONDRIAL-RELATED"/>
    <property type="match status" value="1"/>
</dbReference>
<dbReference type="Pfam" id="PF01180">
    <property type="entry name" value="DHO_dh"/>
    <property type="match status" value="1"/>
</dbReference>
<dbReference type="SUPFAM" id="SSF51395">
    <property type="entry name" value="FMN-linked oxidoreductases"/>
    <property type="match status" value="1"/>
</dbReference>
<dbReference type="PROSITE" id="PS00911">
    <property type="entry name" value="DHODEHASE_1"/>
    <property type="match status" value="1"/>
</dbReference>
<dbReference type="PROSITE" id="PS00912">
    <property type="entry name" value="DHODEHASE_2"/>
    <property type="match status" value="1"/>
</dbReference>